<name>UXAC_YERPY</name>
<protein>
    <recommendedName>
        <fullName evidence="1">Uronate isomerase</fullName>
        <ecNumber evidence="1">5.3.1.12</ecNumber>
    </recommendedName>
    <alternativeName>
        <fullName evidence="1">Glucuronate isomerase</fullName>
    </alternativeName>
    <alternativeName>
        <fullName evidence="1">Uronic isomerase</fullName>
    </alternativeName>
</protein>
<keyword id="KW-0413">Isomerase</keyword>
<dbReference type="EC" id="5.3.1.12" evidence="1"/>
<dbReference type="EMBL" id="CP000950">
    <property type="protein sequence ID" value="ACA66857.1"/>
    <property type="molecule type" value="Genomic_DNA"/>
</dbReference>
<dbReference type="RefSeq" id="WP_002210410.1">
    <property type="nucleotide sequence ID" value="NZ_CP009792.1"/>
</dbReference>
<dbReference type="SMR" id="B1JL96"/>
<dbReference type="GeneID" id="57974037"/>
<dbReference type="KEGG" id="ypy:YPK_0554"/>
<dbReference type="PATRIC" id="fig|502800.11.peg.1167"/>
<dbReference type="UniPathway" id="UPA00246"/>
<dbReference type="GO" id="GO:0008880">
    <property type="term" value="F:glucuronate isomerase activity"/>
    <property type="evidence" value="ECO:0007669"/>
    <property type="project" value="UniProtKB-UniRule"/>
</dbReference>
<dbReference type="GO" id="GO:0019698">
    <property type="term" value="P:D-galacturonate catabolic process"/>
    <property type="evidence" value="ECO:0007669"/>
    <property type="project" value="TreeGrafter"/>
</dbReference>
<dbReference type="GO" id="GO:0042840">
    <property type="term" value="P:D-glucuronate catabolic process"/>
    <property type="evidence" value="ECO:0007669"/>
    <property type="project" value="TreeGrafter"/>
</dbReference>
<dbReference type="Gene3D" id="3.20.20.140">
    <property type="entry name" value="Metal-dependent hydrolases"/>
    <property type="match status" value="1"/>
</dbReference>
<dbReference type="Gene3D" id="1.10.2020.10">
    <property type="entry name" value="uronate isomerase, domain 2, chain A"/>
    <property type="match status" value="1"/>
</dbReference>
<dbReference type="HAMAP" id="MF_00675">
    <property type="entry name" value="UxaC"/>
    <property type="match status" value="1"/>
</dbReference>
<dbReference type="InterPro" id="IPR032466">
    <property type="entry name" value="Metal_Hydrolase"/>
</dbReference>
<dbReference type="InterPro" id="IPR003766">
    <property type="entry name" value="Uronate_isomerase"/>
</dbReference>
<dbReference type="NCBIfam" id="NF002794">
    <property type="entry name" value="PRK02925.1"/>
    <property type="match status" value="1"/>
</dbReference>
<dbReference type="PANTHER" id="PTHR30068">
    <property type="entry name" value="URONATE ISOMERASE"/>
    <property type="match status" value="1"/>
</dbReference>
<dbReference type="PANTHER" id="PTHR30068:SF4">
    <property type="entry name" value="URONATE ISOMERASE"/>
    <property type="match status" value="1"/>
</dbReference>
<dbReference type="Pfam" id="PF02614">
    <property type="entry name" value="UxaC"/>
    <property type="match status" value="1"/>
</dbReference>
<dbReference type="SUPFAM" id="SSF51556">
    <property type="entry name" value="Metallo-dependent hydrolases"/>
    <property type="match status" value="1"/>
</dbReference>
<sequence length="469" mass="53475">MSQFLTEDFLLDTEFARRLYHDYAKDQPIFDYHCHLPPEQIAENYRFKNMYDIWLKGDHYKWRAMRTNGVAERLCTGDASDREKFDAWAATVPHTIGNPLYHWTHLELRRPFGITGKLLSPATSEEIWQRGNELLAQDPFSARGIMQQMNVKMVGTTDDPIDDLRHHKAIAADGSFNIKVLPSWRPDKAFNIEAAGFNDYMQRLEAAADTSISRFADLCVALNKRMDHFAAHGCKVSDHALDVVVYGEADETTLDAILARRLAGNQPSTEEIAQFKTAVLLFLSGEYHRREWVQQYHIGALRNNNSRMFNLVGPDIGFDSINDQPLAQPLSRLLDAQGLRNALPKTILYCLNPRDNEVIGTMVGNFQGEGEAGKMQFGSGWWFNDQKDGMQRQMTQLAQLGLLSRFVGMLTDSRSFLSYTRHEYFRRILCQMIGRWVADGEAPADIALLGAMVKNICFDNAQQYFAIEL</sequence>
<proteinExistence type="inferred from homology"/>
<reference key="1">
    <citation type="submission" date="2008-02" db="EMBL/GenBank/DDBJ databases">
        <title>Complete sequence of Yersinia pseudotuberculosis YPIII.</title>
        <authorList>
            <consortium name="US DOE Joint Genome Institute"/>
            <person name="Copeland A."/>
            <person name="Lucas S."/>
            <person name="Lapidus A."/>
            <person name="Glavina del Rio T."/>
            <person name="Dalin E."/>
            <person name="Tice H."/>
            <person name="Bruce D."/>
            <person name="Goodwin L."/>
            <person name="Pitluck S."/>
            <person name="Munk A.C."/>
            <person name="Brettin T."/>
            <person name="Detter J.C."/>
            <person name="Han C."/>
            <person name="Tapia R."/>
            <person name="Schmutz J."/>
            <person name="Larimer F."/>
            <person name="Land M."/>
            <person name="Hauser L."/>
            <person name="Challacombe J.F."/>
            <person name="Green L."/>
            <person name="Lindler L.E."/>
            <person name="Nikolich M.P."/>
            <person name="Richardson P."/>
        </authorList>
    </citation>
    <scope>NUCLEOTIDE SEQUENCE [LARGE SCALE GENOMIC DNA]</scope>
    <source>
        <strain>YPIII</strain>
    </source>
</reference>
<evidence type="ECO:0000255" key="1">
    <source>
        <dbReference type="HAMAP-Rule" id="MF_00675"/>
    </source>
</evidence>
<accession>B1JL96</accession>
<comment type="catalytic activity">
    <reaction evidence="1">
        <text>D-glucuronate = D-fructuronate</text>
        <dbReference type="Rhea" id="RHEA:13049"/>
        <dbReference type="ChEBI" id="CHEBI:58720"/>
        <dbReference type="ChEBI" id="CHEBI:59863"/>
        <dbReference type="EC" id="5.3.1.12"/>
    </reaction>
</comment>
<comment type="catalytic activity">
    <reaction evidence="1">
        <text>aldehydo-D-galacturonate = keto-D-tagaturonate</text>
        <dbReference type="Rhea" id="RHEA:27702"/>
        <dbReference type="ChEBI" id="CHEBI:12952"/>
        <dbReference type="ChEBI" id="CHEBI:17886"/>
        <dbReference type="EC" id="5.3.1.12"/>
    </reaction>
</comment>
<comment type="pathway">
    <text evidence="1">Carbohydrate metabolism; pentose and glucuronate interconversion.</text>
</comment>
<comment type="similarity">
    <text evidence="1">Belongs to the metallo-dependent hydrolases superfamily. Uronate isomerase family.</text>
</comment>
<organism>
    <name type="scientific">Yersinia pseudotuberculosis serotype O:3 (strain YPIII)</name>
    <dbReference type="NCBI Taxonomy" id="502800"/>
    <lineage>
        <taxon>Bacteria</taxon>
        <taxon>Pseudomonadati</taxon>
        <taxon>Pseudomonadota</taxon>
        <taxon>Gammaproteobacteria</taxon>
        <taxon>Enterobacterales</taxon>
        <taxon>Yersiniaceae</taxon>
        <taxon>Yersinia</taxon>
    </lineage>
</organism>
<feature type="chain" id="PRO_1000131618" description="Uronate isomerase">
    <location>
        <begin position="1"/>
        <end position="469"/>
    </location>
</feature>
<gene>
    <name evidence="1" type="primary">uxaC</name>
    <name type="ordered locus">YPK_0554</name>
</gene>